<organism>
    <name type="scientific">Pseudoalteromonas translucida (strain TAC 125)</name>
    <dbReference type="NCBI Taxonomy" id="326442"/>
    <lineage>
        <taxon>Bacteria</taxon>
        <taxon>Pseudomonadati</taxon>
        <taxon>Pseudomonadota</taxon>
        <taxon>Gammaproteobacteria</taxon>
        <taxon>Alteromonadales</taxon>
        <taxon>Pseudoalteromonadaceae</taxon>
        <taxon>Pseudoalteromonas</taxon>
    </lineage>
</organism>
<name>RSMJ_PSET1</name>
<protein>
    <recommendedName>
        <fullName evidence="1">Ribosomal RNA small subunit methyltransferase J</fullName>
        <ecNumber evidence="1">2.1.1.242</ecNumber>
    </recommendedName>
    <alternativeName>
        <fullName evidence="1">16S rRNA m2G1516 methyltransferase</fullName>
    </alternativeName>
    <alternativeName>
        <fullName evidence="1">rRNA (guanine-N(2)-)-methyltransferase</fullName>
    </alternativeName>
</protein>
<comment type="function">
    <text evidence="1">Specifically methylates the guanosine in position 1516 of 16S rRNA.</text>
</comment>
<comment type="catalytic activity">
    <reaction evidence="1">
        <text>guanosine(1516) in 16S rRNA + S-adenosyl-L-methionine = N(2)-methylguanosine(1516) in 16S rRNA + S-adenosyl-L-homocysteine + H(+)</text>
        <dbReference type="Rhea" id="RHEA:43220"/>
        <dbReference type="Rhea" id="RHEA-COMP:10412"/>
        <dbReference type="Rhea" id="RHEA-COMP:10413"/>
        <dbReference type="ChEBI" id="CHEBI:15378"/>
        <dbReference type="ChEBI" id="CHEBI:57856"/>
        <dbReference type="ChEBI" id="CHEBI:59789"/>
        <dbReference type="ChEBI" id="CHEBI:74269"/>
        <dbReference type="ChEBI" id="CHEBI:74481"/>
        <dbReference type="EC" id="2.1.1.242"/>
    </reaction>
</comment>
<comment type="subcellular location">
    <subcellularLocation>
        <location evidence="1">Cytoplasm</location>
    </subcellularLocation>
</comment>
<comment type="similarity">
    <text evidence="1">Belongs to the methyltransferase superfamily. RsmJ family.</text>
</comment>
<feature type="chain" id="PRO_0000244275" description="Ribosomal RNA small subunit methyltransferase J">
    <location>
        <begin position="1"/>
        <end position="252"/>
    </location>
</feature>
<feature type="binding site" evidence="1">
    <location>
        <begin position="101"/>
        <end position="102"/>
    </location>
    <ligand>
        <name>S-adenosyl-L-methionine</name>
        <dbReference type="ChEBI" id="CHEBI:59789"/>
    </ligand>
</feature>
<feature type="binding site" evidence="1">
    <location>
        <begin position="117"/>
        <end position="118"/>
    </location>
    <ligand>
        <name>S-adenosyl-L-methionine</name>
        <dbReference type="ChEBI" id="CHEBI:59789"/>
    </ligand>
</feature>
<feature type="binding site" evidence="1">
    <location>
        <begin position="153"/>
        <end position="154"/>
    </location>
    <ligand>
        <name>S-adenosyl-L-methionine</name>
        <dbReference type="ChEBI" id="CHEBI:59789"/>
    </ligand>
</feature>
<feature type="binding site" evidence="1">
    <location>
        <position position="171"/>
    </location>
    <ligand>
        <name>S-adenosyl-L-methionine</name>
        <dbReference type="ChEBI" id="CHEBI:59789"/>
    </ligand>
</feature>
<accession>Q3IIA6</accession>
<sequence>MVIKCAFKECRPYLNELETRFGLAHWADQSSGFSLHYDDTGLSLYKTDEPKLGAISVDFVTGAAAHRRKFGGGKGQAIAKAVGLNKGATPIVLDATAGLGRDGFVLASLGCKVILHERHPVVAALLYDGLQRAYNDIEIGPWMQQNMSLIFGSSHTLLAQCESMPDVVYLDPMFPHREKSALVKKEMRVFQDLVGADTDADDLLEFAYPLASKRVVVKRPDYAPFLNDKTPSMQIKTKKNRFDVYVKAAMKK</sequence>
<proteinExistence type="inferred from homology"/>
<evidence type="ECO:0000255" key="1">
    <source>
        <dbReference type="HAMAP-Rule" id="MF_01523"/>
    </source>
</evidence>
<dbReference type="EC" id="2.1.1.242" evidence="1"/>
<dbReference type="EMBL" id="CR954246">
    <property type="protein sequence ID" value="CAI85460.1"/>
    <property type="molecule type" value="Genomic_DNA"/>
</dbReference>
<dbReference type="SMR" id="Q3IIA6"/>
<dbReference type="STRING" id="326442.PSHAa0362"/>
<dbReference type="KEGG" id="pha:PSHAa0362"/>
<dbReference type="PATRIC" id="fig|326442.8.peg.345"/>
<dbReference type="eggNOG" id="COG0742">
    <property type="taxonomic scope" value="Bacteria"/>
</dbReference>
<dbReference type="HOGENOM" id="CLU_076324_0_1_6"/>
<dbReference type="BioCyc" id="PHAL326442:PSHA_RS01795-MONOMER"/>
<dbReference type="Proteomes" id="UP000006843">
    <property type="component" value="Chromosome I"/>
</dbReference>
<dbReference type="GO" id="GO:0005737">
    <property type="term" value="C:cytoplasm"/>
    <property type="evidence" value="ECO:0007669"/>
    <property type="project" value="UniProtKB-SubCell"/>
</dbReference>
<dbReference type="GO" id="GO:0008990">
    <property type="term" value="F:rRNA (guanine-N2-)-methyltransferase activity"/>
    <property type="evidence" value="ECO:0007669"/>
    <property type="project" value="UniProtKB-UniRule"/>
</dbReference>
<dbReference type="Gene3D" id="3.40.50.150">
    <property type="entry name" value="Vaccinia Virus protein VP39"/>
    <property type="match status" value="1"/>
</dbReference>
<dbReference type="Gene3D" id="3.40.1630.10">
    <property type="entry name" value="YhiQ-like domain"/>
    <property type="match status" value="1"/>
</dbReference>
<dbReference type="HAMAP" id="MF_01523">
    <property type="entry name" value="16SrRNA_methyltr_J"/>
    <property type="match status" value="1"/>
</dbReference>
<dbReference type="InterPro" id="IPR007536">
    <property type="entry name" value="16SrRNA_methylTrfase_J"/>
</dbReference>
<dbReference type="InterPro" id="IPR029063">
    <property type="entry name" value="SAM-dependent_MTases_sf"/>
</dbReference>
<dbReference type="PANTHER" id="PTHR36112">
    <property type="entry name" value="RIBOSOMAL RNA SMALL SUBUNIT METHYLTRANSFERASE J"/>
    <property type="match status" value="1"/>
</dbReference>
<dbReference type="PANTHER" id="PTHR36112:SF1">
    <property type="entry name" value="RIBOSOMAL RNA SMALL SUBUNIT METHYLTRANSFERASE J"/>
    <property type="match status" value="1"/>
</dbReference>
<dbReference type="Pfam" id="PF04445">
    <property type="entry name" value="SAM_MT"/>
    <property type="match status" value="1"/>
</dbReference>
<dbReference type="SUPFAM" id="SSF53335">
    <property type="entry name" value="S-adenosyl-L-methionine-dependent methyltransferases"/>
    <property type="match status" value="1"/>
</dbReference>
<keyword id="KW-0963">Cytoplasm</keyword>
<keyword id="KW-0489">Methyltransferase</keyword>
<keyword id="KW-1185">Reference proteome</keyword>
<keyword id="KW-0698">rRNA processing</keyword>
<keyword id="KW-0949">S-adenosyl-L-methionine</keyword>
<keyword id="KW-0808">Transferase</keyword>
<reference key="1">
    <citation type="journal article" date="2005" name="Genome Res.">
        <title>Coping with cold: the genome of the versatile marine Antarctica bacterium Pseudoalteromonas haloplanktis TAC125.</title>
        <authorList>
            <person name="Medigue C."/>
            <person name="Krin E."/>
            <person name="Pascal G."/>
            <person name="Barbe V."/>
            <person name="Bernsel A."/>
            <person name="Bertin P.N."/>
            <person name="Cheung F."/>
            <person name="Cruveiller S."/>
            <person name="D'Amico S."/>
            <person name="Duilio A."/>
            <person name="Fang G."/>
            <person name="Feller G."/>
            <person name="Ho C."/>
            <person name="Mangenot S."/>
            <person name="Marino G."/>
            <person name="Nilsson J."/>
            <person name="Parrilli E."/>
            <person name="Rocha E.P.C."/>
            <person name="Rouy Z."/>
            <person name="Sekowska A."/>
            <person name="Tutino M.L."/>
            <person name="Vallenet D."/>
            <person name="von Heijne G."/>
            <person name="Danchin A."/>
        </authorList>
    </citation>
    <scope>NUCLEOTIDE SEQUENCE [LARGE SCALE GENOMIC DNA]</scope>
    <source>
        <strain>TAC 125</strain>
    </source>
</reference>
<gene>
    <name evidence="1" type="primary">rsmJ</name>
    <name type="ordered locus">PSHAa0362</name>
</gene>